<protein>
    <recommendedName>
        <fullName evidence="1">ATP synthase epsilon chain</fullName>
    </recommendedName>
    <alternativeName>
        <fullName evidence="1">ATP synthase F1 sector epsilon subunit</fullName>
    </alternativeName>
    <alternativeName>
        <fullName evidence="1">F-ATPase epsilon subunit</fullName>
    </alternativeName>
</protein>
<keyword id="KW-0066">ATP synthesis</keyword>
<keyword id="KW-1003">Cell membrane</keyword>
<keyword id="KW-0139">CF(1)</keyword>
<keyword id="KW-0375">Hydrogen ion transport</keyword>
<keyword id="KW-0406">Ion transport</keyword>
<keyword id="KW-0472">Membrane</keyword>
<keyword id="KW-0813">Transport</keyword>
<feature type="chain" id="PRO_1000211793" description="ATP synthase epsilon chain">
    <location>
        <begin position="1"/>
        <end position="138"/>
    </location>
</feature>
<accession>C0MH16</accession>
<proteinExistence type="inferred from homology"/>
<organism>
    <name type="scientific">Streptococcus equi subsp. zooepidemicus (strain H70)</name>
    <dbReference type="NCBI Taxonomy" id="553483"/>
    <lineage>
        <taxon>Bacteria</taxon>
        <taxon>Bacillati</taxon>
        <taxon>Bacillota</taxon>
        <taxon>Bacilli</taxon>
        <taxon>Lactobacillales</taxon>
        <taxon>Streptococcaceae</taxon>
        <taxon>Streptococcus</taxon>
    </lineage>
</organism>
<reference key="1">
    <citation type="journal article" date="2009" name="PLoS Pathog.">
        <title>Genomic evidence for the evolution of Streptococcus equi: host restriction, increased virulence, and genetic exchange with human pathogens.</title>
        <authorList>
            <person name="Holden M.T.G."/>
            <person name="Heather Z."/>
            <person name="Paillot R."/>
            <person name="Steward K.F."/>
            <person name="Webb K."/>
            <person name="Ainslie F."/>
            <person name="Jourdan T."/>
            <person name="Bason N.C."/>
            <person name="Holroyd N.E."/>
            <person name="Mungall K."/>
            <person name="Quail M.A."/>
            <person name="Sanders M."/>
            <person name="Simmonds M."/>
            <person name="Willey D."/>
            <person name="Brooks K."/>
            <person name="Aanensen D.M."/>
            <person name="Spratt B.G."/>
            <person name="Jolley K.A."/>
            <person name="Maiden M.C.J."/>
            <person name="Kehoe M."/>
            <person name="Chanter N."/>
            <person name="Bentley S.D."/>
            <person name="Robinson C."/>
            <person name="Maskell D.J."/>
            <person name="Parkhill J."/>
            <person name="Waller A.S."/>
        </authorList>
    </citation>
    <scope>NUCLEOTIDE SEQUENCE [LARGE SCALE GENOMIC DNA]</scope>
    <source>
        <strain>H70</strain>
    </source>
</reference>
<sequence length="138" mass="15571">MTQMTVQVVTPDGIKYDHHAKFISVTTPDGEMGILPNHINVIAPLQVHEMKIRRVSEDDRVDWVAINGGIIEIKDNVVTIVADSAERDRDIDVSRAERAKLRAERDIAEAETTHDINEVQRAKVALRRALNRINVSKK</sequence>
<dbReference type="EMBL" id="FM204884">
    <property type="protein sequence ID" value="CAW99600.1"/>
    <property type="molecule type" value="Genomic_DNA"/>
</dbReference>
<dbReference type="SMR" id="C0MH16"/>
<dbReference type="KEGG" id="seq:SZO_11620"/>
<dbReference type="eggNOG" id="COG0355">
    <property type="taxonomic scope" value="Bacteria"/>
</dbReference>
<dbReference type="HOGENOM" id="CLU_084338_1_0_9"/>
<dbReference type="Proteomes" id="UP000001368">
    <property type="component" value="Chromosome"/>
</dbReference>
<dbReference type="GO" id="GO:0005886">
    <property type="term" value="C:plasma membrane"/>
    <property type="evidence" value="ECO:0007669"/>
    <property type="project" value="UniProtKB-SubCell"/>
</dbReference>
<dbReference type="GO" id="GO:0045259">
    <property type="term" value="C:proton-transporting ATP synthase complex"/>
    <property type="evidence" value="ECO:0007669"/>
    <property type="project" value="UniProtKB-KW"/>
</dbReference>
<dbReference type="GO" id="GO:0005524">
    <property type="term" value="F:ATP binding"/>
    <property type="evidence" value="ECO:0007669"/>
    <property type="project" value="UniProtKB-UniRule"/>
</dbReference>
<dbReference type="GO" id="GO:0046933">
    <property type="term" value="F:proton-transporting ATP synthase activity, rotational mechanism"/>
    <property type="evidence" value="ECO:0007669"/>
    <property type="project" value="UniProtKB-UniRule"/>
</dbReference>
<dbReference type="CDD" id="cd12152">
    <property type="entry name" value="F1-ATPase_delta"/>
    <property type="match status" value="1"/>
</dbReference>
<dbReference type="Gene3D" id="1.20.5.440">
    <property type="entry name" value="ATP synthase delta/epsilon subunit, C-terminal domain"/>
    <property type="match status" value="1"/>
</dbReference>
<dbReference type="Gene3D" id="2.60.15.10">
    <property type="entry name" value="F0F1 ATP synthase delta/epsilon subunit, N-terminal"/>
    <property type="match status" value="1"/>
</dbReference>
<dbReference type="HAMAP" id="MF_00530">
    <property type="entry name" value="ATP_synth_epsil_bac"/>
    <property type="match status" value="1"/>
</dbReference>
<dbReference type="InterPro" id="IPR001469">
    <property type="entry name" value="ATP_synth_F1_dsu/esu"/>
</dbReference>
<dbReference type="InterPro" id="IPR020546">
    <property type="entry name" value="ATP_synth_F1_dsu/esu_N"/>
</dbReference>
<dbReference type="InterPro" id="IPR020547">
    <property type="entry name" value="ATP_synth_F1_esu_C"/>
</dbReference>
<dbReference type="InterPro" id="IPR036771">
    <property type="entry name" value="ATPsynth_dsu/esu_N"/>
</dbReference>
<dbReference type="NCBIfam" id="TIGR01216">
    <property type="entry name" value="ATP_synt_epsi"/>
    <property type="match status" value="1"/>
</dbReference>
<dbReference type="NCBIfam" id="NF001846">
    <property type="entry name" value="PRK00571.1-3"/>
    <property type="match status" value="1"/>
</dbReference>
<dbReference type="PANTHER" id="PTHR13822">
    <property type="entry name" value="ATP SYNTHASE DELTA/EPSILON CHAIN"/>
    <property type="match status" value="1"/>
</dbReference>
<dbReference type="PANTHER" id="PTHR13822:SF10">
    <property type="entry name" value="ATP SYNTHASE EPSILON CHAIN, CHLOROPLASTIC"/>
    <property type="match status" value="1"/>
</dbReference>
<dbReference type="Pfam" id="PF00401">
    <property type="entry name" value="ATP-synt_DE"/>
    <property type="match status" value="1"/>
</dbReference>
<dbReference type="Pfam" id="PF02823">
    <property type="entry name" value="ATP-synt_DE_N"/>
    <property type="match status" value="1"/>
</dbReference>
<dbReference type="SUPFAM" id="SSF51344">
    <property type="entry name" value="Epsilon subunit of F1F0-ATP synthase N-terminal domain"/>
    <property type="match status" value="1"/>
</dbReference>
<name>ATPE_STRS7</name>
<comment type="function">
    <text evidence="1">Produces ATP from ADP in the presence of a proton gradient across the membrane.</text>
</comment>
<comment type="subunit">
    <text evidence="1">F-type ATPases have 2 components, CF(1) - the catalytic core - and CF(0) - the membrane proton channel. CF(1) has five subunits: alpha(3), beta(3), gamma(1), delta(1), epsilon(1). CF(0) has three main subunits: a, b and c.</text>
</comment>
<comment type="subcellular location">
    <subcellularLocation>
        <location evidence="1">Cell membrane</location>
        <topology evidence="1">Peripheral membrane protein</topology>
    </subcellularLocation>
</comment>
<comment type="similarity">
    <text evidence="1">Belongs to the ATPase epsilon chain family.</text>
</comment>
<evidence type="ECO:0000255" key="1">
    <source>
        <dbReference type="HAMAP-Rule" id="MF_00530"/>
    </source>
</evidence>
<gene>
    <name evidence="1" type="primary">atpC</name>
    <name type="ordered locus">SZO_11620</name>
</gene>